<comment type="function">
    <text>This is a copper-containing oxidase that functions in the formation of pigments such as melanins and other polyphenolic compounds.</text>
</comment>
<comment type="catalytic activity">
    <reaction>
        <text>2 L-dopa + O2 = 2 L-dopaquinone + 2 H2O</text>
        <dbReference type="Rhea" id="RHEA:34287"/>
        <dbReference type="ChEBI" id="CHEBI:15377"/>
        <dbReference type="ChEBI" id="CHEBI:15379"/>
        <dbReference type="ChEBI" id="CHEBI:57504"/>
        <dbReference type="ChEBI" id="CHEBI:57924"/>
        <dbReference type="EC" id="1.14.18.1"/>
    </reaction>
</comment>
<comment type="catalytic activity">
    <reaction>
        <text>L-tyrosine + O2 = L-dopaquinone + H2O</text>
        <dbReference type="Rhea" id="RHEA:18117"/>
        <dbReference type="ChEBI" id="CHEBI:15377"/>
        <dbReference type="ChEBI" id="CHEBI:15379"/>
        <dbReference type="ChEBI" id="CHEBI:57924"/>
        <dbReference type="ChEBI" id="CHEBI:58315"/>
        <dbReference type="EC" id="1.14.18.1"/>
    </reaction>
</comment>
<comment type="cofactor">
    <cofactor evidence="1">
        <name>Cu(2+)</name>
        <dbReference type="ChEBI" id="CHEBI:29036"/>
    </cofactor>
    <text evidence="1">Binds 2 copper ions per subunit.</text>
</comment>
<comment type="similarity">
    <text evidence="4">Belongs to the tyrosinase family.</text>
</comment>
<comment type="sequence caution" evidence="4">
    <conflict type="frameshift">
        <sequence resource="EMBL-CDS" id="AAA33618"/>
    </conflict>
</comment>
<comment type="sequence caution" evidence="4">
    <conflict type="frameshift">
        <sequence resource="EMBL-CDS" id="AAA33619"/>
    </conflict>
</comment>
<comment type="sequence caution" evidence="4">
    <conflict type="erroneous gene model prediction">
        <sequence resource="EMBL-CDS" id="EAA35696"/>
    </conflict>
</comment>
<proteinExistence type="evidence at protein level"/>
<gene>
    <name type="primary">T</name>
    <name type="ORF">90C4.150</name>
    <name type="ORF">NCU00776</name>
</gene>
<accession>P00440</accession>
<accession>Q6MGJ7</accession>
<accession>Q7RVL7</accession>
<dbReference type="EC" id="1.14.18.1"/>
<dbReference type="EMBL" id="M32843">
    <property type="protein sequence ID" value="AAA33619.1"/>
    <property type="status" value="ALT_FRAME"/>
    <property type="molecule type" value="Genomic_DNA"/>
</dbReference>
<dbReference type="EMBL" id="M33271">
    <property type="protein sequence ID" value="AAA33618.1"/>
    <property type="status" value="ALT_FRAME"/>
    <property type="molecule type" value="Genomic_DNA"/>
</dbReference>
<dbReference type="EMBL" id="BX842680">
    <property type="protein sequence ID" value="CAE81941.1"/>
    <property type="molecule type" value="Genomic_DNA"/>
</dbReference>
<dbReference type="EMBL" id="CM002236">
    <property type="protein sequence ID" value="EAA35696.3"/>
    <property type="status" value="ALT_SEQ"/>
    <property type="molecule type" value="Genomic_DNA"/>
</dbReference>
<dbReference type="PIR" id="A34460">
    <property type="entry name" value="YRNC"/>
</dbReference>
<dbReference type="RefSeq" id="XP_964932.3">
    <property type="nucleotide sequence ID" value="XM_959839.3"/>
</dbReference>
<dbReference type="SMR" id="P00440"/>
<dbReference type="STRING" id="367110.P00440"/>
<dbReference type="iPTMnet" id="P00440"/>
<dbReference type="PaxDb" id="5141-EFNCRP00000000584"/>
<dbReference type="EnsemblFungi" id="EAA35696">
    <property type="protein sequence ID" value="EAA35696"/>
    <property type="gene ID" value="NCU00776"/>
</dbReference>
<dbReference type="GeneID" id="3881081"/>
<dbReference type="KEGG" id="ncr:NCU00776"/>
<dbReference type="HOGENOM" id="CLU_013691_3_1_1"/>
<dbReference type="InParanoid" id="P00440"/>
<dbReference type="OrthoDB" id="6132182at2759"/>
<dbReference type="Proteomes" id="UP000001805">
    <property type="component" value="Chromosome 1, Linkage Group I"/>
</dbReference>
<dbReference type="GO" id="GO:0046872">
    <property type="term" value="F:metal ion binding"/>
    <property type="evidence" value="ECO:0007669"/>
    <property type="project" value="UniProtKB-KW"/>
</dbReference>
<dbReference type="GO" id="GO:0004503">
    <property type="term" value="F:tyrosinase activity"/>
    <property type="evidence" value="ECO:0007669"/>
    <property type="project" value="UniProtKB-EC"/>
</dbReference>
<dbReference type="GO" id="GO:0042438">
    <property type="term" value="P:melanin biosynthetic process"/>
    <property type="evidence" value="ECO:0007669"/>
    <property type="project" value="UniProtKB-KW"/>
</dbReference>
<dbReference type="Gene3D" id="2.60.310.20">
    <property type="match status" value="1"/>
</dbReference>
<dbReference type="Gene3D" id="1.10.1280.10">
    <property type="entry name" value="Di-copper center containing domain from catechol oxidase"/>
    <property type="match status" value="1"/>
</dbReference>
<dbReference type="InterPro" id="IPR008922">
    <property type="entry name" value="Di-copper_centre_dom_sf"/>
</dbReference>
<dbReference type="InterPro" id="IPR016216">
    <property type="entry name" value="Monophenol_mOase_fun"/>
</dbReference>
<dbReference type="InterPro" id="IPR050316">
    <property type="entry name" value="Tyrosinase/Hemocyanin"/>
</dbReference>
<dbReference type="InterPro" id="IPR041640">
    <property type="entry name" value="Tyrosinase_C"/>
</dbReference>
<dbReference type="InterPro" id="IPR002227">
    <property type="entry name" value="Tyrosinase_Cu-bd"/>
</dbReference>
<dbReference type="PANTHER" id="PTHR11474:SF76">
    <property type="entry name" value="SHKT DOMAIN-CONTAINING PROTEIN"/>
    <property type="match status" value="1"/>
</dbReference>
<dbReference type="PANTHER" id="PTHR11474">
    <property type="entry name" value="TYROSINASE FAMILY MEMBER"/>
    <property type="match status" value="1"/>
</dbReference>
<dbReference type="Pfam" id="PF00264">
    <property type="entry name" value="Tyrosinase"/>
    <property type="match status" value="1"/>
</dbReference>
<dbReference type="Pfam" id="PF18132">
    <property type="entry name" value="Tyrosinase_C"/>
    <property type="match status" value="1"/>
</dbReference>
<dbReference type="PIRSF" id="PIRSF000340">
    <property type="entry name" value="MPO_fungal"/>
    <property type="match status" value="1"/>
</dbReference>
<dbReference type="PRINTS" id="PR00092">
    <property type="entry name" value="TYROSINASE"/>
</dbReference>
<dbReference type="SUPFAM" id="SSF48056">
    <property type="entry name" value="Di-copper centre-containing domain"/>
    <property type="match status" value="1"/>
</dbReference>
<dbReference type="PROSITE" id="PS00497">
    <property type="entry name" value="TYROSINASE_1"/>
    <property type="match status" value="1"/>
</dbReference>
<dbReference type="PROSITE" id="PS00498">
    <property type="entry name" value="TYROSINASE_2"/>
    <property type="match status" value="1"/>
</dbReference>
<protein>
    <recommendedName>
        <fullName>Tyrosinase</fullName>
        <ecNumber>1.14.18.1</ecNumber>
    </recommendedName>
    <alternativeName>
        <fullName>Monophenol monooxygenase</fullName>
    </alternativeName>
</protein>
<keyword id="KW-0007">Acetylation</keyword>
<keyword id="KW-0186">Copper</keyword>
<keyword id="KW-0903">Direct protein sequencing</keyword>
<keyword id="KW-0470">Melanin biosynthesis</keyword>
<keyword id="KW-0479">Metal-binding</keyword>
<keyword id="KW-0503">Monooxygenase</keyword>
<keyword id="KW-0560">Oxidoreductase</keyword>
<keyword id="KW-1185">Reference proteome</keyword>
<keyword id="KW-0883">Thioether bond</keyword>
<name>TYRO_NEUCR</name>
<reference key="1">
    <citation type="journal article" date="1989" name="J. Biol. Chem.">
        <title>Isolation and characterization of the tyrosinase gene from Neurospora crassa.</title>
        <authorList>
            <person name="Kupper U."/>
            <person name="Niedermann D.M."/>
            <person name="Travaglini G."/>
            <person name="Lerch K."/>
        </authorList>
    </citation>
    <scope>NUCLEOTIDE SEQUENCE [GENOMIC DNA]</scope>
    <source>
        <strain>Oak Ridge</strain>
        <strain>TS</strain>
    </source>
</reference>
<reference key="2">
    <citation type="journal article" date="2003" name="Nucleic Acids Res.">
        <title>What's in the genome of a filamentous fungus? Analysis of the Neurospora genome sequence.</title>
        <authorList>
            <person name="Mannhaupt G."/>
            <person name="Montrone C."/>
            <person name="Haase D."/>
            <person name="Mewes H.-W."/>
            <person name="Aign V."/>
            <person name="Hoheisel J.D."/>
            <person name="Fartmann B."/>
            <person name="Nyakatura G."/>
            <person name="Kempken F."/>
            <person name="Maier J."/>
            <person name="Schulte U."/>
        </authorList>
    </citation>
    <scope>NUCLEOTIDE SEQUENCE [LARGE SCALE GENOMIC DNA]</scope>
    <source>
        <strain>ATCC 24698 / 74-OR23-1A / CBS 708.71 / DSM 1257 / FGSC 987</strain>
    </source>
</reference>
<reference key="3">
    <citation type="journal article" date="2003" name="Nature">
        <title>The genome sequence of the filamentous fungus Neurospora crassa.</title>
        <authorList>
            <person name="Galagan J.E."/>
            <person name="Calvo S.E."/>
            <person name="Borkovich K.A."/>
            <person name="Selker E.U."/>
            <person name="Read N.D."/>
            <person name="Jaffe D.B."/>
            <person name="FitzHugh W."/>
            <person name="Ma L.-J."/>
            <person name="Smirnov S."/>
            <person name="Purcell S."/>
            <person name="Rehman B."/>
            <person name="Elkins T."/>
            <person name="Engels R."/>
            <person name="Wang S."/>
            <person name="Nielsen C.B."/>
            <person name="Butler J."/>
            <person name="Endrizzi M."/>
            <person name="Qui D."/>
            <person name="Ianakiev P."/>
            <person name="Bell-Pedersen D."/>
            <person name="Nelson M.A."/>
            <person name="Werner-Washburne M."/>
            <person name="Selitrennikoff C.P."/>
            <person name="Kinsey J.A."/>
            <person name="Braun E.L."/>
            <person name="Zelter A."/>
            <person name="Schulte U."/>
            <person name="Kothe G.O."/>
            <person name="Jedd G."/>
            <person name="Mewes H.-W."/>
            <person name="Staben C."/>
            <person name="Marcotte E."/>
            <person name="Greenberg D."/>
            <person name="Roy A."/>
            <person name="Foley K."/>
            <person name="Naylor J."/>
            <person name="Stange-Thomann N."/>
            <person name="Barrett R."/>
            <person name="Gnerre S."/>
            <person name="Kamal M."/>
            <person name="Kamvysselis M."/>
            <person name="Mauceli E.W."/>
            <person name="Bielke C."/>
            <person name="Rudd S."/>
            <person name="Frishman D."/>
            <person name="Krystofova S."/>
            <person name="Rasmussen C."/>
            <person name="Metzenberg R.L."/>
            <person name="Perkins D.D."/>
            <person name="Kroken S."/>
            <person name="Cogoni C."/>
            <person name="Macino G."/>
            <person name="Catcheside D.E.A."/>
            <person name="Li W."/>
            <person name="Pratt R.J."/>
            <person name="Osmani S.A."/>
            <person name="DeSouza C.P.C."/>
            <person name="Glass N.L."/>
            <person name="Orbach M.J."/>
            <person name="Berglund J.A."/>
            <person name="Voelker R."/>
            <person name="Yarden O."/>
            <person name="Plamann M."/>
            <person name="Seiler S."/>
            <person name="Dunlap J.C."/>
            <person name="Radford A."/>
            <person name="Aramayo R."/>
            <person name="Natvig D.O."/>
            <person name="Alex L.A."/>
            <person name="Mannhaupt G."/>
            <person name="Ebbole D.J."/>
            <person name="Freitag M."/>
            <person name="Paulsen I."/>
            <person name="Sachs M.S."/>
            <person name="Lander E.S."/>
            <person name="Nusbaum C."/>
            <person name="Birren B.W."/>
        </authorList>
    </citation>
    <scope>NUCLEOTIDE SEQUENCE [LARGE SCALE GENOMIC DNA]</scope>
    <source>
        <strain>ATCC 24698 / 74-OR23-1A / CBS 708.71 / DSM 1257 / FGSC 987</strain>
    </source>
</reference>
<reference key="4">
    <citation type="journal article" date="1982" name="J. Biol. Chem.">
        <title>Primary structure of tyrosinase from Neurospora crassa. II. Complete amino acid sequence and chemical structure of a tripeptide containing an unusual thioether.</title>
        <authorList>
            <person name="Lerch K."/>
        </authorList>
    </citation>
    <scope>PROTEIN SEQUENCE OF 2-408</scope>
    <scope>ACETYLATION AT SER-2</scope>
    <source>
        <strain>TL</strain>
    </source>
</reference>
<reference key="5">
    <citation type="journal article" date="1982" name="J. Biol. Chem.">
        <title>Comparison of amino acid sequence and thermostability of tyrosinase from three wild type strains of Neurospora crassa.</title>
        <authorList>
            <person name="Ruegg C."/>
            <person name="Ammer D."/>
            <person name="Lerch K."/>
        </authorList>
    </citation>
    <scope>PROTEIN SEQUENCE OF 2-408</scope>
    <source>
        <strain>Sing</strain>
        <strain>TS</strain>
    </source>
</reference>
<feature type="initiator methionine" description="Removed" evidence="2 3">
    <location>
        <position position="1"/>
    </location>
</feature>
<feature type="chain" id="PRO_0000035895" description="Tyrosinase">
    <location>
        <begin position="2"/>
        <end position="408"/>
    </location>
</feature>
<feature type="propeptide" id="PRO_0000035896" description="Could be involved in enzyme activation">
    <location>
        <begin position="409"/>
        <end position="685"/>
    </location>
</feature>
<feature type="binding site" evidence="1">
    <location>
        <position position="67"/>
    </location>
    <ligand>
        <name>Cu cation</name>
        <dbReference type="ChEBI" id="CHEBI:23378"/>
        <label>A</label>
    </ligand>
</feature>
<feature type="binding site" evidence="1">
    <location>
        <position position="97"/>
    </location>
    <ligand>
        <name>Cu cation</name>
        <dbReference type="ChEBI" id="CHEBI:23378"/>
        <label>A</label>
    </ligand>
</feature>
<feature type="binding site" evidence="1">
    <location>
        <position position="106"/>
    </location>
    <ligand>
        <name>Cu cation</name>
        <dbReference type="ChEBI" id="CHEBI:23378"/>
        <label>A</label>
    </ligand>
</feature>
<feature type="binding site" evidence="1">
    <location>
        <position position="278"/>
    </location>
    <ligand>
        <name>Cu cation</name>
        <dbReference type="ChEBI" id="CHEBI:23378"/>
        <label>B</label>
    </ligand>
</feature>
<feature type="binding site" evidence="1">
    <location>
        <position position="282"/>
    </location>
    <ligand>
        <name>Cu cation</name>
        <dbReference type="ChEBI" id="CHEBI:23378"/>
        <label>B</label>
    </ligand>
</feature>
<feature type="binding site" evidence="1">
    <location>
        <position position="307"/>
    </location>
    <ligand>
        <name>Cu cation</name>
        <dbReference type="ChEBI" id="CHEBI:23378"/>
        <label>B</label>
    </ligand>
</feature>
<feature type="modified residue" description="N-acetylserine" evidence="2">
    <location>
        <position position="2"/>
    </location>
</feature>
<feature type="cross-link" description="2'-(S-cysteinyl)-histidine (Cys-His)">
    <location>
        <begin position="95"/>
        <end position="97"/>
    </location>
</feature>
<feature type="sequence variant" description="In strain: Sing, TL and TS.">
    <original>P</original>
    <variation>T</variation>
    <location>
        <position position="15"/>
    </location>
</feature>
<feature type="sequence variant" description="In strain: Sing.">
    <original>D</original>
    <variation>E</variation>
    <location>
        <position position="30"/>
    </location>
</feature>
<feature type="sequence variant" description="In strain: Sing.">
    <original>V</original>
    <variation>T</variation>
    <location>
        <position position="130"/>
    </location>
</feature>
<feature type="sequence variant" description="In strain: TL.">
    <original>D</original>
    <variation>N</variation>
    <location>
        <position position="202"/>
    </location>
</feature>
<feature type="sequence variant" description="In strain: Sing.">
    <original>KS</original>
    <variation>QN</variation>
    <location>
        <begin position="346"/>
        <end position="347"/>
    </location>
</feature>
<feature type="sequence variant" description="In strain: Sing.">
    <original>I</original>
    <variation>T</variation>
    <location>
        <position position="371"/>
    </location>
</feature>
<feature type="sequence variant" description="In strain: TS.">
    <original>K</original>
    <variation>N</variation>
    <location>
        <position position="424"/>
    </location>
</feature>
<feature type="sequence variant" description="In strain: TS.">
    <original>K</original>
    <variation>R</variation>
    <location>
        <position position="450"/>
    </location>
</feature>
<feature type="sequence variant" description="In strain: TS.">
    <original>G</original>
    <variation>R</variation>
    <location>
        <position position="678"/>
    </location>
</feature>
<feature type="sequence conflict" description="In Ref. 4; AA sequence and 5; AA sequence." evidence="4" ref="4 5">
    <original>N</original>
    <variation>D</variation>
    <location>
        <position position="235"/>
    </location>
</feature>
<sequence>MSTDIKFAITGVPTPPSSNGAVPLRRELRDLQQNYPEQFNLYLLGLRDFQGLDEAKLDSYYQVAGIHGMPFKPWAGVPSDTDWSQPGSSGFGGYCTHSSILFITWHRPYLALYEQALYASVQAVAQKFPVEGGLRAKYVAAAKDFRAPYFDWASQPPKGTLAFPESLSSRTIQVVDVDGKTKSINNPLHRFTFHPVNPSPGDFSAAWSRYPSTVRYPNRLTGASRDERIAPILANELASLRNNVSLLLLSYKDFDAFSYNRWDPNTNPGDFGSLEDVHNEIHDRTGGNGHMSSLEVSAFDPLFWLHHVNVDRLWSIWQDLNPNSFMTPRPAPYSTFVAQEGESQSKSTPLEPFWDKSAANFWTSEQVKDSITFGYAYPETQKWKYSSVKEYQAAIRKSVTALYGSNVFANFVENVADRTPALKKPQATGEESKSTVSAAAAHAVELSGAKKVAEKVHNVFQHAEEKAQKPVVPVKDTKAESSTAAGMMIGLSIKRPSKLTASPGPIPESLKYLAPDGKYTDWIVNVRAQKHGLGQSFRVIVFLGEFNPDPETWDDEFNCVGRVSVLGRSAETQCGKCRKDNANGLIVSGTVPLTSALLQDIVGGELQSLKPEDVIPHLRANLKWKVALFNGDEYNLEEVPDLKVSVASTEVTIDEEGLPHYSRQYTVYPEITEGKPCGHGPEDHI</sequence>
<evidence type="ECO:0000250" key="1">
    <source>
        <dbReference type="UniProtKB" id="Q9ZP19"/>
    </source>
</evidence>
<evidence type="ECO:0000269" key="2">
    <source>
    </source>
</evidence>
<evidence type="ECO:0000269" key="3">
    <source>
    </source>
</evidence>
<evidence type="ECO:0000305" key="4"/>
<organism>
    <name type="scientific">Neurospora crassa (strain ATCC 24698 / 74-OR23-1A / CBS 708.71 / DSM 1257 / FGSC 987)</name>
    <dbReference type="NCBI Taxonomy" id="367110"/>
    <lineage>
        <taxon>Eukaryota</taxon>
        <taxon>Fungi</taxon>
        <taxon>Dikarya</taxon>
        <taxon>Ascomycota</taxon>
        <taxon>Pezizomycotina</taxon>
        <taxon>Sordariomycetes</taxon>
        <taxon>Sordariomycetidae</taxon>
        <taxon>Sordariales</taxon>
        <taxon>Sordariaceae</taxon>
        <taxon>Neurospora</taxon>
    </lineage>
</organism>